<protein>
    <recommendedName>
        <fullName>Uncharacterized secreted protein ARB_06907</fullName>
    </recommendedName>
</protein>
<reference key="1">
    <citation type="journal article" date="2011" name="Genome Biol.">
        <title>Comparative and functional genomics provide insights into the pathogenicity of dermatophytic fungi.</title>
        <authorList>
            <person name="Burmester A."/>
            <person name="Shelest E."/>
            <person name="Gloeckner G."/>
            <person name="Heddergott C."/>
            <person name="Schindler S."/>
            <person name="Staib P."/>
            <person name="Heidel A."/>
            <person name="Felder M."/>
            <person name="Petzold A."/>
            <person name="Szafranski K."/>
            <person name="Feuermann M."/>
            <person name="Pedruzzi I."/>
            <person name="Priebe S."/>
            <person name="Groth M."/>
            <person name="Winkler R."/>
            <person name="Li W."/>
            <person name="Kniemeyer O."/>
            <person name="Schroeckh V."/>
            <person name="Hertweck C."/>
            <person name="Hube B."/>
            <person name="White T.C."/>
            <person name="Platzer M."/>
            <person name="Guthke R."/>
            <person name="Heitman J."/>
            <person name="Woestemeyer J."/>
            <person name="Zipfel P.F."/>
            <person name="Monod M."/>
            <person name="Brakhage A.A."/>
        </authorList>
    </citation>
    <scope>NUCLEOTIDE SEQUENCE [LARGE SCALE GENOMIC DNA]</scope>
    <scope>IDENTIFICATION BY MASS SPECTROMETRY</scope>
    <scope>SUBCELLULAR LOCATION</scope>
    <source>
        <strain>ATCC MYA-4681 / CBS 112371</strain>
    </source>
</reference>
<reference key="2">
    <citation type="journal article" date="2011" name="Proteomics">
        <title>Identification of novel secreted proteases during extracellular proteolysis by dermatophytes at acidic pH.</title>
        <authorList>
            <person name="Sriranganadane D."/>
            <person name="Waridel P."/>
            <person name="Salamin K."/>
            <person name="Feuermann M."/>
            <person name="Mignon B."/>
            <person name="Staib P."/>
            <person name="Neuhaus J.M."/>
            <person name="Quadroni M."/>
            <person name="Monod M."/>
        </authorList>
    </citation>
    <scope>IDENTIFICATION BY MASS SPECTROMETRY</scope>
    <scope>SUBCELLULAR LOCATION</scope>
</reference>
<proteinExistence type="evidence at protein level"/>
<accession>D4AK18</accession>
<feature type="signal peptide" evidence="1">
    <location>
        <begin position="1"/>
        <end position="16"/>
    </location>
</feature>
<feature type="chain" id="PRO_0000435277" description="Uncharacterized secreted protein ARB_06907">
    <location>
        <begin position="17"/>
        <end position="204"/>
    </location>
</feature>
<sequence>MKYTFLAVLSAVTVLATPAPVPTPPNIPSASTAQSLLSGLTVRPQGPQDGYSRDKFPHWITISGTCNTRETVLRRDGTNVQVDGSCAATSGSWFSPYDGATWTAASDVDIDHVVPLSNAWKSGAASWTTSQRQSFANDLSNPQLIAVTDNVNQAKGDQGPESWKPPLQSYWCTYSRMWIKVKSVYDLSVTSAEKSALTSMLNTC</sequence>
<gene>
    <name type="ORF">ARB_04619</name>
</gene>
<comment type="subcellular location">
    <subcellularLocation>
        <location evidence="2 3">Secreted</location>
    </subcellularLocation>
</comment>
<comment type="sequence caution" evidence="4">
    <conflict type="erroneous initiation">
        <sequence resource="EMBL-CDS" id="EFE37091"/>
    </conflict>
    <text>Extended N-terminus.</text>
</comment>
<name>A4619_ARTBC</name>
<evidence type="ECO:0000255" key="1"/>
<evidence type="ECO:0000269" key="2">
    <source>
    </source>
</evidence>
<evidence type="ECO:0000269" key="3">
    <source>
    </source>
</evidence>
<evidence type="ECO:0000305" key="4"/>
<keyword id="KW-1185">Reference proteome</keyword>
<keyword id="KW-0964">Secreted</keyword>
<keyword id="KW-0732">Signal</keyword>
<organism>
    <name type="scientific">Arthroderma benhamiae (strain ATCC MYA-4681 / CBS 112371)</name>
    <name type="common">Trichophyton mentagrophytes</name>
    <dbReference type="NCBI Taxonomy" id="663331"/>
    <lineage>
        <taxon>Eukaryota</taxon>
        <taxon>Fungi</taxon>
        <taxon>Dikarya</taxon>
        <taxon>Ascomycota</taxon>
        <taxon>Pezizomycotina</taxon>
        <taxon>Eurotiomycetes</taxon>
        <taxon>Eurotiomycetidae</taxon>
        <taxon>Onygenales</taxon>
        <taxon>Arthrodermataceae</taxon>
        <taxon>Trichophyton</taxon>
    </lineage>
</organism>
<dbReference type="EMBL" id="ABSU01000001">
    <property type="protein sequence ID" value="EFE37091.1"/>
    <property type="status" value="ALT_INIT"/>
    <property type="molecule type" value="Genomic_DNA"/>
</dbReference>
<dbReference type="RefSeq" id="XP_003017736.1">
    <property type="nucleotide sequence ID" value="XM_003017690.1"/>
</dbReference>
<dbReference type="STRING" id="663331.D4AK18"/>
<dbReference type="GeneID" id="9522582"/>
<dbReference type="KEGG" id="abe:ARB_04619"/>
<dbReference type="eggNOG" id="ENOG502QWPZ">
    <property type="taxonomic scope" value="Eukaryota"/>
</dbReference>
<dbReference type="HOGENOM" id="CLU_043034_3_1_1"/>
<dbReference type="OrthoDB" id="3162605at2759"/>
<dbReference type="Proteomes" id="UP000008866">
    <property type="component" value="Unassembled WGS sequence"/>
</dbReference>
<dbReference type="GO" id="GO:0005576">
    <property type="term" value="C:extracellular region"/>
    <property type="evidence" value="ECO:0007669"/>
    <property type="project" value="UniProtKB-SubCell"/>
</dbReference>
<dbReference type="InterPro" id="IPR011089">
    <property type="entry name" value="GmrSD_C"/>
</dbReference>
<dbReference type="PANTHER" id="PTHR24094:SF15">
    <property type="entry name" value="AMP-DEPENDENT SYNTHETASE_LIGASE DOMAIN-CONTAINING PROTEIN-RELATED"/>
    <property type="match status" value="1"/>
</dbReference>
<dbReference type="PANTHER" id="PTHR24094">
    <property type="entry name" value="SECRETED PROTEIN"/>
    <property type="match status" value="1"/>
</dbReference>
<dbReference type="Pfam" id="PF07510">
    <property type="entry name" value="GmrSD_C"/>
    <property type="match status" value="1"/>
</dbReference>